<reference key="1">
    <citation type="journal article" date="2003" name="Nature">
        <title>Genome sequence of Bacillus cereus and comparative analysis with Bacillus anthracis.</title>
        <authorList>
            <person name="Ivanova N."/>
            <person name="Sorokin A."/>
            <person name="Anderson I."/>
            <person name="Galleron N."/>
            <person name="Candelon B."/>
            <person name="Kapatral V."/>
            <person name="Bhattacharyya A."/>
            <person name="Reznik G."/>
            <person name="Mikhailova N."/>
            <person name="Lapidus A."/>
            <person name="Chu L."/>
            <person name="Mazur M."/>
            <person name="Goltsman E."/>
            <person name="Larsen N."/>
            <person name="D'Souza M."/>
            <person name="Walunas T."/>
            <person name="Grechkin Y."/>
            <person name="Pusch G."/>
            <person name="Haselkorn R."/>
            <person name="Fonstein M."/>
            <person name="Ehrlich S.D."/>
            <person name="Overbeek R."/>
            <person name="Kyrpides N.C."/>
        </authorList>
    </citation>
    <scope>NUCLEOTIDE SEQUENCE [LARGE SCALE GENOMIC DNA]</scope>
    <source>
        <strain>ATCC 14579 / DSM 31 / CCUG 7414 / JCM 2152 / NBRC 15305 / NCIMB 9373 / NCTC 2599 / NRRL B-3711</strain>
    </source>
</reference>
<feature type="chain" id="PRO_0000094957" description="UPF0291 protein BC_3688">
    <location>
        <begin position="1"/>
        <end position="79"/>
    </location>
</feature>
<accession>Q812Y7</accession>
<proteinExistence type="inferred from homology"/>
<name>Y3688_BACCR</name>
<evidence type="ECO:0000255" key="1">
    <source>
        <dbReference type="HAMAP-Rule" id="MF_01103"/>
    </source>
</evidence>
<organism>
    <name type="scientific">Bacillus cereus (strain ATCC 14579 / DSM 31 / CCUG 7414 / JCM 2152 / NBRC 15305 / NCIMB 9373 / NCTC 2599 / NRRL B-3711)</name>
    <dbReference type="NCBI Taxonomy" id="226900"/>
    <lineage>
        <taxon>Bacteria</taxon>
        <taxon>Bacillati</taxon>
        <taxon>Bacillota</taxon>
        <taxon>Bacilli</taxon>
        <taxon>Bacillales</taxon>
        <taxon>Bacillaceae</taxon>
        <taxon>Bacillus</taxon>
        <taxon>Bacillus cereus group</taxon>
    </lineage>
</organism>
<comment type="subcellular location">
    <subcellularLocation>
        <location evidence="1">Cytoplasm</location>
    </subcellularLocation>
</comment>
<comment type="similarity">
    <text evidence="1">Belongs to the UPF0291 family.</text>
</comment>
<dbReference type="EMBL" id="AE016877">
    <property type="protein sequence ID" value="AAP10617.1"/>
    <property type="molecule type" value="Genomic_DNA"/>
</dbReference>
<dbReference type="RefSeq" id="NP_833416.1">
    <property type="nucleotide sequence ID" value="NC_004722.1"/>
</dbReference>
<dbReference type="RefSeq" id="WP_000607016.1">
    <property type="nucleotide sequence ID" value="NZ_CP138336.1"/>
</dbReference>
<dbReference type="SMR" id="Q812Y7"/>
<dbReference type="STRING" id="226900.BC_3688"/>
<dbReference type="KEGG" id="bce:BC3688"/>
<dbReference type="PATRIC" id="fig|226900.8.peg.3793"/>
<dbReference type="HOGENOM" id="CLU_173137_0_2_9"/>
<dbReference type="OrthoDB" id="390105at2"/>
<dbReference type="Proteomes" id="UP000001417">
    <property type="component" value="Chromosome"/>
</dbReference>
<dbReference type="GO" id="GO:0005737">
    <property type="term" value="C:cytoplasm"/>
    <property type="evidence" value="ECO:0007669"/>
    <property type="project" value="UniProtKB-SubCell"/>
</dbReference>
<dbReference type="Gene3D" id="1.10.287.540">
    <property type="entry name" value="Helix hairpin bin"/>
    <property type="match status" value="1"/>
</dbReference>
<dbReference type="HAMAP" id="MF_01103">
    <property type="entry name" value="UPF0291"/>
    <property type="match status" value="1"/>
</dbReference>
<dbReference type="InterPro" id="IPR009242">
    <property type="entry name" value="DUF896"/>
</dbReference>
<dbReference type="NCBIfam" id="NF002422">
    <property type="entry name" value="PRK01546.1"/>
    <property type="match status" value="1"/>
</dbReference>
<dbReference type="PANTHER" id="PTHR37300">
    <property type="entry name" value="UPF0291 PROTEIN CBO2609/CLC_2481"/>
    <property type="match status" value="1"/>
</dbReference>
<dbReference type="PANTHER" id="PTHR37300:SF1">
    <property type="entry name" value="UPF0291 PROTEIN YNZC"/>
    <property type="match status" value="1"/>
</dbReference>
<dbReference type="Pfam" id="PF05979">
    <property type="entry name" value="DUF896"/>
    <property type="match status" value="1"/>
</dbReference>
<dbReference type="SUPFAM" id="SSF158221">
    <property type="entry name" value="YnzC-like"/>
    <property type="match status" value="1"/>
</dbReference>
<gene>
    <name type="ordered locus">BC_3688</name>
</gene>
<sequence>MINHELVERINFLAKKAKAEGLTEEEQRERQSLREQYLKGFRQNMLNELKGIKVVNEEGTDVTPTKLKALKKQDNARLN</sequence>
<keyword id="KW-0963">Cytoplasm</keyword>
<keyword id="KW-1185">Reference proteome</keyword>
<protein>
    <recommendedName>
        <fullName evidence="1">UPF0291 protein BC_3688</fullName>
    </recommendedName>
</protein>